<keyword id="KW-0539">Nucleus</keyword>
<keyword id="KW-1185">Reference proteome</keyword>
<keyword id="KW-0677">Repeat</keyword>
<keyword id="KW-0690">Ribosome biogenesis</keyword>
<keyword id="KW-0698">rRNA processing</keyword>
<keyword id="KW-0853">WD repeat</keyword>
<dbReference type="EMBL" id="CM001231">
    <property type="protein sequence ID" value="EHA57353.1"/>
    <property type="molecule type" value="Genomic_DNA"/>
</dbReference>
<dbReference type="RefSeq" id="XP_003709965.1">
    <property type="nucleotide sequence ID" value="XM_003709917.1"/>
</dbReference>
<dbReference type="SMR" id="A4R0Q1"/>
<dbReference type="FunCoup" id="A4R0Q1">
    <property type="interactions" value="1001"/>
</dbReference>
<dbReference type="STRING" id="242507.A4R0Q1"/>
<dbReference type="EnsemblFungi" id="MGG_09313T0">
    <property type="protein sequence ID" value="MGG_09313T0"/>
    <property type="gene ID" value="MGG_09313"/>
</dbReference>
<dbReference type="GeneID" id="2680228"/>
<dbReference type="KEGG" id="mgr:MGG_09313"/>
<dbReference type="VEuPathDB" id="FungiDB:MGG_09313"/>
<dbReference type="eggNOG" id="KOG0650">
    <property type="taxonomic scope" value="Eukaryota"/>
</dbReference>
<dbReference type="HOGENOM" id="CLU_011390_0_1_1"/>
<dbReference type="InParanoid" id="A4R0Q1"/>
<dbReference type="OMA" id="MRPAKGE"/>
<dbReference type="OrthoDB" id="5571054at2759"/>
<dbReference type="Proteomes" id="UP000009058">
    <property type="component" value="Chromosome 1"/>
</dbReference>
<dbReference type="GO" id="GO:0005654">
    <property type="term" value="C:nucleoplasm"/>
    <property type="evidence" value="ECO:0007669"/>
    <property type="project" value="UniProtKB-SubCell"/>
</dbReference>
<dbReference type="GO" id="GO:0070545">
    <property type="term" value="C:PeBoW complex"/>
    <property type="evidence" value="ECO:0007669"/>
    <property type="project" value="EnsemblFungi"/>
</dbReference>
<dbReference type="GO" id="GO:0030687">
    <property type="term" value="C:preribosome, large subunit precursor"/>
    <property type="evidence" value="ECO:0007669"/>
    <property type="project" value="UniProtKB-UniRule"/>
</dbReference>
<dbReference type="GO" id="GO:0070180">
    <property type="term" value="F:large ribosomal subunit rRNA binding"/>
    <property type="evidence" value="ECO:0007669"/>
    <property type="project" value="EnsemblFungi"/>
</dbReference>
<dbReference type="GO" id="GO:0043021">
    <property type="term" value="F:ribonucleoprotein complex binding"/>
    <property type="evidence" value="ECO:0007669"/>
    <property type="project" value="UniProtKB-UniRule"/>
</dbReference>
<dbReference type="GO" id="GO:0000466">
    <property type="term" value="P:maturation of 5.8S rRNA from tricistronic rRNA transcript (SSU-rRNA, 5.8S rRNA, LSU-rRNA)"/>
    <property type="evidence" value="ECO:0007669"/>
    <property type="project" value="UniProtKB-UniRule"/>
</dbReference>
<dbReference type="GO" id="GO:0000463">
    <property type="term" value="P:maturation of LSU-rRNA from tricistronic rRNA transcript (SSU-rRNA, 5.8S rRNA, LSU-rRNA)"/>
    <property type="evidence" value="ECO:0007669"/>
    <property type="project" value="UniProtKB-UniRule"/>
</dbReference>
<dbReference type="FunFam" id="2.130.10.10:FF:000061">
    <property type="entry name" value="Ribosome biogenesis protein BOP1 homolog"/>
    <property type="match status" value="1"/>
</dbReference>
<dbReference type="Gene3D" id="2.130.10.10">
    <property type="entry name" value="YVTN repeat-like/Quinoprotein amine dehydrogenase"/>
    <property type="match status" value="1"/>
</dbReference>
<dbReference type="HAMAP" id="MF_03027">
    <property type="entry name" value="BOP1"/>
    <property type="match status" value="1"/>
</dbReference>
<dbReference type="InterPro" id="IPR028598">
    <property type="entry name" value="BOP1/Erb1"/>
</dbReference>
<dbReference type="InterPro" id="IPR012953">
    <property type="entry name" value="BOP1_N_dom"/>
</dbReference>
<dbReference type="InterPro" id="IPR015943">
    <property type="entry name" value="WD40/YVTN_repeat-like_dom_sf"/>
</dbReference>
<dbReference type="InterPro" id="IPR036322">
    <property type="entry name" value="WD40_repeat_dom_sf"/>
</dbReference>
<dbReference type="InterPro" id="IPR001680">
    <property type="entry name" value="WD40_rpt"/>
</dbReference>
<dbReference type="PANTHER" id="PTHR17605:SF0">
    <property type="entry name" value="RIBOSOME BIOGENESIS PROTEIN BOP1"/>
    <property type="match status" value="1"/>
</dbReference>
<dbReference type="PANTHER" id="PTHR17605">
    <property type="entry name" value="RIBOSOME BIOGENESIS PROTEIN BOP1 BLOCK OF PROLIFERATION 1 PROTEIN"/>
    <property type="match status" value="1"/>
</dbReference>
<dbReference type="Pfam" id="PF08145">
    <property type="entry name" value="BOP1NT"/>
    <property type="match status" value="1"/>
</dbReference>
<dbReference type="Pfam" id="PF00400">
    <property type="entry name" value="WD40"/>
    <property type="match status" value="2"/>
</dbReference>
<dbReference type="SMART" id="SM01035">
    <property type="entry name" value="BOP1NT"/>
    <property type="match status" value="1"/>
</dbReference>
<dbReference type="SMART" id="SM00320">
    <property type="entry name" value="WD40"/>
    <property type="match status" value="6"/>
</dbReference>
<dbReference type="SUPFAM" id="SSF50978">
    <property type="entry name" value="WD40 repeat-like"/>
    <property type="match status" value="1"/>
</dbReference>
<dbReference type="PROSITE" id="PS50082">
    <property type="entry name" value="WD_REPEATS_2"/>
    <property type="match status" value="2"/>
</dbReference>
<dbReference type="PROSITE" id="PS50294">
    <property type="entry name" value="WD_REPEATS_REGION"/>
    <property type="match status" value="1"/>
</dbReference>
<name>ERB1_PYRO7</name>
<proteinExistence type="inferred from homology"/>
<gene>
    <name evidence="1" type="primary">ERB1</name>
    <name type="ORF">MGG_09313</name>
</gene>
<organism>
    <name type="scientific">Pyricularia oryzae (strain 70-15 / ATCC MYA-4617 / FGSC 8958)</name>
    <name type="common">Rice blast fungus</name>
    <name type="synonym">Magnaporthe oryzae</name>
    <dbReference type="NCBI Taxonomy" id="242507"/>
    <lineage>
        <taxon>Eukaryota</taxon>
        <taxon>Fungi</taxon>
        <taxon>Dikarya</taxon>
        <taxon>Ascomycota</taxon>
        <taxon>Pezizomycotina</taxon>
        <taxon>Sordariomycetes</taxon>
        <taxon>Sordariomycetidae</taxon>
        <taxon>Magnaporthales</taxon>
        <taxon>Pyriculariaceae</taxon>
        <taxon>Pyricularia</taxon>
    </lineage>
</organism>
<accession>A4R0Q1</accession>
<accession>G4MQR6</accession>
<sequence>MAPTAPAKKRKQSAEVTELSDDEIIDGLLDGALSQSEDDSDFVASGDEDEEDEDEDEDEDKDEDDEHDDKQDIGDLQDLSLNDLDDDAQSKELAKDGANGGSGDGPEADDEDRPNYRVVEDANGGIRYVYDEINPVYDSDDSDKEEDNRIGDIPLSFYEAYPHVGYTIDGKKLMRPSERRQALDSLLDSIEIPKGWTGLTDPTTGKPLNLSQDELELLKRVQMNEIPEEGYDPYPDTVEYFTGIEEKMPLSAAPEPKRRFIPSKHEAKRVMKLVRAIREGRIQPYKSKEEREKEEEGKEEKYYDVWQDEQPRDPHVMHIPAPKLAPPGYDMSYNPPPEYLPTKAEREEWEKMDPEDREKEYLPQKFDALRKVPGYETFVKERFERCLDLYLAPRVRKNRLNIDPASLLPKLPRPEELKPFPTVCQAIFRGHEGRVRSSAIDPTGLWLATGGDDGYVRIWLINPARQVWAVKLSSDEAVNAVRWRPTKDTMILAAAAGEEIFLMVPPDIDPEVEQTSRAVLDAGFGHAAGGADKQTTDGKAPAAKWARPGARLEDEGVLVKVTVRSPVKVISWHRRGDHFCTVSPSGQRSSVAVHTLSKHLSQIPFRKLSGLAQVAHFHPSRPLFFVATQRTIRCYDLQRLELVKVVQPGARWISSFDIHPGGDNLIVGSYDRRLLWHDLDLSTRPYKTMRFHPQAIRAVKYHRGGLPLFADASDDGSLQIFHGKVVSDLMENATIVPLKSLKGHRVVDSLGVMDVDWHPSEPWCISAGADGTCRLWM</sequence>
<feature type="chain" id="PRO_0000370433" description="Ribosome biogenesis protein ERB1">
    <location>
        <begin position="1"/>
        <end position="777"/>
    </location>
</feature>
<feature type="repeat" description="WD 1">
    <location>
        <begin position="430"/>
        <end position="469"/>
    </location>
</feature>
<feature type="repeat" description="WD 2">
    <location>
        <begin position="473"/>
        <end position="513"/>
    </location>
</feature>
<feature type="repeat" description="WD 3">
    <location>
        <begin position="562"/>
        <end position="604"/>
    </location>
</feature>
<feature type="repeat" description="WD 4">
    <location>
        <begin position="606"/>
        <end position="645"/>
    </location>
</feature>
<feature type="repeat" description="WD 5">
    <location>
        <begin position="648"/>
        <end position="687"/>
    </location>
</feature>
<feature type="repeat" description="WD 6">
    <location>
        <begin position="691"/>
        <end position="731"/>
    </location>
</feature>
<feature type="repeat" description="WD 7">
    <location>
        <begin position="747"/>
        <end position="777"/>
    </location>
</feature>
<feature type="region of interest" description="Disordered" evidence="2">
    <location>
        <begin position="1"/>
        <end position="122"/>
    </location>
</feature>
<feature type="compositionally biased region" description="Acidic residues" evidence="2">
    <location>
        <begin position="36"/>
        <end position="67"/>
    </location>
</feature>
<protein>
    <recommendedName>
        <fullName evidence="1">Ribosome biogenesis protein ERB1</fullName>
    </recommendedName>
    <alternativeName>
        <fullName evidence="1">Eukaryotic ribosome biogenesis protein 1</fullName>
    </alternativeName>
</protein>
<reference key="1">
    <citation type="journal article" date="2005" name="Nature">
        <title>The genome sequence of the rice blast fungus Magnaporthe grisea.</title>
        <authorList>
            <person name="Dean R.A."/>
            <person name="Talbot N.J."/>
            <person name="Ebbole D.J."/>
            <person name="Farman M.L."/>
            <person name="Mitchell T.K."/>
            <person name="Orbach M.J."/>
            <person name="Thon M.R."/>
            <person name="Kulkarni R."/>
            <person name="Xu J.-R."/>
            <person name="Pan H."/>
            <person name="Read N.D."/>
            <person name="Lee Y.-H."/>
            <person name="Carbone I."/>
            <person name="Brown D."/>
            <person name="Oh Y.Y."/>
            <person name="Donofrio N."/>
            <person name="Jeong J.S."/>
            <person name="Soanes D.M."/>
            <person name="Djonovic S."/>
            <person name="Kolomiets E."/>
            <person name="Rehmeyer C."/>
            <person name="Li W."/>
            <person name="Harding M."/>
            <person name="Kim S."/>
            <person name="Lebrun M.-H."/>
            <person name="Bohnert H."/>
            <person name="Coughlan S."/>
            <person name="Butler J."/>
            <person name="Calvo S.E."/>
            <person name="Ma L.-J."/>
            <person name="Nicol R."/>
            <person name="Purcell S."/>
            <person name="Nusbaum C."/>
            <person name="Galagan J.E."/>
            <person name="Birren B.W."/>
        </authorList>
    </citation>
    <scope>NUCLEOTIDE SEQUENCE [LARGE SCALE GENOMIC DNA]</scope>
    <source>
        <strain>70-15 / ATCC MYA-4617 / FGSC 8958</strain>
    </source>
</reference>
<evidence type="ECO:0000255" key="1">
    <source>
        <dbReference type="HAMAP-Rule" id="MF_03027"/>
    </source>
</evidence>
<evidence type="ECO:0000256" key="2">
    <source>
        <dbReference type="SAM" id="MobiDB-lite"/>
    </source>
</evidence>
<comment type="function">
    <text evidence="1">Component of the NOP7 complex, which is required for maturation of the 25S and 5.8S ribosomal RNAs and formation of the 60S ribosome.</text>
</comment>
<comment type="subunit">
    <text evidence="1">Component of the NOP7 complex, composed of ERB1, NOP7 and YTM1. The complex is held together by ERB1, which interacts with NOP7 via its N-terminal domain and with YTM1 via a high-affinity interaction between the seven-bladed beta-propeller domains of the 2 proteins. The NOP7 complex associates with the 66S pre-ribosome.</text>
</comment>
<comment type="subcellular location">
    <subcellularLocation>
        <location evidence="1">Nucleus</location>
        <location evidence="1">Nucleolus</location>
    </subcellularLocation>
    <subcellularLocation>
        <location evidence="1">Nucleus</location>
        <location evidence="1">Nucleoplasm</location>
    </subcellularLocation>
</comment>
<comment type="similarity">
    <text evidence="1">Belongs to the WD repeat BOP1/ERB1 family.</text>
</comment>